<sequence>MSRYRGPRLKKIRRLGALPGLTRKTPKSGSNQKKKFHSGKKEQYRIRLQEKQKLRFHYGLTERQLLRYVHIAGKAKRSTGQVLLQLLEMRLDNILFRLGMASTIPGARQLVNHRHILVNGRIVDIPSFRCKPRDIITTKDNQRSKRLVQNYIASSDPGKLPKHLTVDTLQYKGLVKKILDRKWVGLKINELLVVEYYSRQT</sequence>
<reference key="1">
    <citation type="journal article" date="1983" name="Nucleic Acids Res.">
        <title>Maize chloroplast DNA encodes a protein sequence homologous to the bacterial ribosome assembly protein S4.</title>
        <authorList>
            <person name="Subramanian A.R."/>
            <person name="Steinmetz A."/>
            <person name="Bogorad L."/>
        </authorList>
    </citation>
    <scope>NUCLEOTIDE SEQUENCE [GENOMIC DNA]</scope>
</reference>
<reference key="2">
    <citation type="journal article" date="1995" name="J. Mol. Biol.">
        <title>Complete sequence of the maize chloroplast genome: gene content, hotspots of divergence and fine tuning of genetic information by transcript editing.</title>
        <authorList>
            <person name="Maier R.M."/>
            <person name="Neckermann K."/>
            <person name="Igloi G.L."/>
            <person name="Koessel H."/>
        </authorList>
    </citation>
    <scope>NUCLEOTIDE SEQUENCE [LARGE SCALE GENOMIC DNA]</scope>
    <source>
        <strain>cv. B73</strain>
    </source>
</reference>
<accession>P02355</accession>
<name>RR4_MAIZE</name>
<dbReference type="EMBL" id="X01608">
    <property type="protein sequence ID" value="CAA25754.1"/>
    <property type="molecule type" value="Genomic_DNA"/>
</dbReference>
<dbReference type="EMBL" id="X86563">
    <property type="protein sequence ID" value="CAA60288.1"/>
    <property type="molecule type" value="Genomic_DNA"/>
</dbReference>
<dbReference type="PIR" id="A02706">
    <property type="entry name" value="R3ZM4"/>
</dbReference>
<dbReference type="RefSeq" id="NP_043027.1">
    <property type="nucleotide sequence ID" value="NC_001666.2"/>
</dbReference>
<dbReference type="SMR" id="P02355"/>
<dbReference type="FunCoup" id="P02355">
    <property type="interactions" value="325"/>
</dbReference>
<dbReference type="STRING" id="4577.P02355"/>
<dbReference type="EnsemblPlants" id="Zm00001eb039080_T001">
    <property type="protein sequence ID" value="Zm00001eb039080_P001"/>
    <property type="gene ID" value="Zm00001eb039080"/>
</dbReference>
<dbReference type="EnsemblPlants" id="Zm00001eb039210_T001">
    <property type="protein sequence ID" value="Zm00001eb039210_P001"/>
    <property type="gene ID" value="Zm00001eb039210"/>
</dbReference>
<dbReference type="EnsemblPlants" id="Zm00001eb435020_T001">
    <property type="protein sequence ID" value="Zm00001eb435020_P001"/>
    <property type="gene ID" value="Zm00001eb435020"/>
</dbReference>
<dbReference type="EnsemblPlants" id="Zm00001eb435220_T001">
    <property type="protein sequence ID" value="Zm00001eb435220_P001"/>
    <property type="gene ID" value="Zm00001eb435220"/>
</dbReference>
<dbReference type="EnsemblPlants" id="Zm00001eb435420_T001">
    <property type="protein sequence ID" value="Zm00001eb435420_P001"/>
    <property type="gene ID" value="Zm00001eb435420"/>
</dbReference>
<dbReference type="EnsemblPlants" id="Zm00001eb435680_T001">
    <property type="protein sequence ID" value="Zm00001eb435680_P001"/>
    <property type="gene ID" value="Zm00001eb435680"/>
</dbReference>
<dbReference type="EnsemblPlants" id="Zm00001eb440990_T001">
    <property type="protein sequence ID" value="Zm00001eb440990_P001"/>
    <property type="gene ID" value="Zm00001eb440990"/>
</dbReference>
<dbReference type="GeneID" id="845238"/>
<dbReference type="Gramene" id="Zm00001eb039080_T001">
    <property type="protein sequence ID" value="Zm00001eb039080_P001"/>
    <property type="gene ID" value="Zm00001eb039080"/>
</dbReference>
<dbReference type="Gramene" id="Zm00001eb039210_T001">
    <property type="protein sequence ID" value="Zm00001eb039210_P001"/>
    <property type="gene ID" value="Zm00001eb039210"/>
</dbReference>
<dbReference type="Gramene" id="Zm00001eb435020_T001">
    <property type="protein sequence ID" value="Zm00001eb435020_P001"/>
    <property type="gene ID" value="Zm00001eb435020"/>
</dbReference>
<dbReference type="Gramene" id="Zm00001eb435220_T001">
    <property type="protein sequence ID" value="Zm00001eb435220_P001"/>
    <property type="gene ID" value="Zm00001eb435220"/>
</dbReference>
<dbReference type="Gramene" id="Zm00001eb435420_T001">
    <property type="protein sequence ID" value="Zm00001eb435420_P001"/>
    <property type="gene ID" value="Zm00001eb435420"/>
</dbReference>
<dbReference type="Gramene" id="Zm00001eb435680_T001">
    <property type="protein sequence ID" value="Zm00001eb435680_P001"/>
    <property type="gene ID" value="Zm00001eb435680"/>
</dbReference>
<dbReference type="Gramene" id="Zm00001eb440990_T001">
    <property type="protein sequence ID" value="Zm00001eb440990_P001"/>
    <property type="gene ID" value="Zm00001eb440990"/>
</dbReference>
<dbReference type="KEGG" id="zma:845238"/>
<dbReference type="MaizeGDB" id="66415"/>
<dbReference type="InParanoid" id="P02355"/>
<dbReference type="OrthoDB" id="726413at2759"/>
<dbReference type="Proteomes" id="UP000007305">
    <property type="component" value="Chloroplast"/>
</dbReference>
<dbReference type="ExpressionAtlas" id="P02355">
    <property type="expression patterns" value="baseline"/>
</dbReference>
<dbReference type="GO" id="GO:0009507">
    <property type="term" value="C:chloroplast"/>
    <property type="evidence" value="ECO:0007669"/>
    <property type="project" value="UniProtKB-SubCell"/>
</dbReference>
<dbReference type="GO" id="GO:0015935">
    <property type="term" value="C:small ribosomal subunit"/>
    <property type="evidence" value="ECO:0000318"/>
    <property type="project" value="GO_Central"/>
</dbReference>
<dbReference type="GO" id="GO:0019843">
    <property type="term" value="F:rRNA binding"/>
    <property type="evidence" value="ECO:0000318"/>
    <property type="project" value="GO_Central"/>
</dbReference>
<dbReference type="GO" id="GO:0003735">
    <property type="term" value="F:structural constituent of ribosome"/>
    <property type="evidence" value="ECO:0000318"/>
    <property type="project" value="GO_Central"/>
</dbReference>
<dbReference type="GO" id="GO:0042274">
    <property type="term" value="P:ribosomal small subunit biogenesis"/>
    <property type="evidence" value="ECO:0000318"/>
    <property type="project" value="GO_Central"/>
</dbReference>
<dbReference type="GO" id="GO:0006412">
    <property type="term" value="P:translation"/>
    <property type="evidence" value="ECO:0007669"/>
    <property type="project" value="UniProtKB-UniRule"/>
</dbReference>
<dbReference type="CDD" id="cd00165">
    <property type="entry name" value="S4"/>
    <property type="match status" value="1"/>
</dbReference>
<dbReference type="FunFam" id="1.10.1050.10:FF:000002">
    <property type="entry name" value="30S ribosomal protein S4, chloroplastic"/>
    <property type="match status" value="1"/>
</dbReference>
<dbReference type="FunFam" id="3.10.290.10:FF:000081">
    <property type="entry name" value="30S ribosomal protein S4, chloroplastic"/>
    <property type="match status" value="1"/>
</dbReference>
<dbReference type="Gene3D" id="1.10.1050.10">
    <property type="entry name" value="Ribosomal Protein S4 Delta 41, Chain A, domain 1"/>
    <property type="match status" value="1"/>
</dbReference>
<dbReference type="Gene3D" id="3.10.290.10">
    <property type="entry name" value="RNA-binding S4 domain"/>
    <property type="match status" value="1"/>
</dbReference>
<dbReference type="HAMAP" id="MF_01306_B">
    <property type="entry name" value="Ribosomal_uS4_B"/>
    <property type="match status" value="1"/>
</dbReference>
<dbReference type="InterPro" id="IPR022801">
    <property type="entry name" value="Ribosomal_uS4"/>
</dbReference>
<dbReference type="InterPro" id="IPR005709">
    <property type="entry name" value="Ribosomal_uS4_bac-type"/>
</dbReference>
<dbReference type="InterPro" id="IPR018079">
    <property type="entry name" value="Ribosomal_uS4_CS"/>
</dbReference>
<dbReference type="InterPro" id="IPR001912">
    <property type="entry name" value="Ribosomal_uS4_N"/>
</dbReference>
<dbReference type="InterPro" id="IPR002942">
    <property type="entry name" value="S4_RNA-bd"/>
</dbReference>
<dbReference type="InterPro" id="IPR036986">
    <property type="entry name" value="S4_RNA-bd_sf"/>
</dbReference>
<dbReference type="NCBIfam" id="NF003717">
    <property type="entry name" value="PRK05327.1"/>
    <property type="match status" value="1"/>
</dbReference>
<dbReference type="NCBIfam" id="TIGR01017">
    <property type="entry name" value="rpsD_bact"/>
    <property type="match status" value="1"/>
</dbReference>
<dbReference type="PANTHER" id="PTHR11831">
    <property type="entry name" value="30S 40S RIBOSOMAL PROTEIN"/>
    <property type="match status" value="1"/>
</dbReference>
<dbReference type="PANTHER" id="PTHR11831:SF4">
    <property type="entry name" value="SMALL RIBOSOMAL SUBUNIT PROTEIN US4M"/>
    <property type="match status" value="1"/>
</dbReference>
<dbReference type="Pfam" id="PF00163">
    <property type="entry name" value="Ribosomal_S4"/>
    <property type="match status" value="1"/>
</dbReference>
<dbReference type="Pfam" id="PF01479">
    <property type="entry name" value="S4"/>
    <property type="match status" value="1"/>
</dbReference>
<dbReference type="SMART" id="SM01390">
    <property type="entry name" value="Ribosomal_S4"/>
    <property type="match status" value="1"/>
</dbReference>
<dbReference type="SMART" id="SM00363">
    <property type="entry name" value="S4"/>
    <property type="match status" value="1"/>
</dbReference>
<dbReference type="SUPFAM" id="SSF55174">
    <property type="entry name" value="Alpha-L RNA-binding motif"/>
    <property type="match status" value="1"/>
</dbReference>
<dbReference type="PROSITE" id="PS00632">
    <property type="entry name" value="RIBOSOMAL_S4"/>
    <property type="match status" value="1"/>
</dbReference>
<dbReference type="PROSITE" id="PS50889">
    <property type="entry name" value="S4"/>
    <property type="match status" value="1"/>
</dbReference>
<geneLocation type="chloroplast"/>
<feature type="chain" id="PRO_0000132624" description="Small ribosomal subunit protein uS4c">
    <location>
        <begin position="1"/>
        <end position="201"/>
    </location>
</feature>
<feature type="domain" description="S4 RNA-binding">
    <location>
        <begin position="89"/>
        <end position="150"/>
    </location>
</feature>
<feature type="region of interest" description="Disordered" evidence="2">
    <location>
        <begin position="15"/>
        <end position="43"/>
    </location>
</feature>
<evidence type="ECO:0000250" key="1"/>
<evidence type="ECO:0000256" key="2">
    <source>
        <dbReference type="SAM" id="MobiDB-lite"/>
    </source>
</evidence>
<evidence type="ECO:0000305" key="3"/>
<proteinExistence type="inferred from homology"/>
<comment type="function">
    <text evidence="1">One of the primary rRNA binding proteins, it binds directly to 16S rRNA where it nucleates assembly of the body of the 30S subunit.</text>
</comment>
<comment type="function">
    <text evidence="1">With S5 and S12 plays an important role in translational accuracy.</text>
</comment>
<comment type="subunit">
    <text evidence="1">Part of the 30S ribosomal subunit. Contacts protein S5. The interaction surface between S4 and S5 is involved in control of translational fidelity (By similarity).</text>
</comment>
<comment type="subcellular location">
    <subcellularLocation>
        <location>Plastid</location>
        <location>Chloroplast</location>
    </subcellularLocation>
</comment>
<comment type="similarity">
    <text evidence="3">Belongs to the universal ribosomal protein uS4 family.</text>
</comment>
<gene>
    <name type="primary">rps4</name>
</gene>
<organism>
    <name type="scientific">Zea mays</name>
    <name type="common">Maize</name>
    <dbReference type="NCBI Taxonomy" id="4577"/>
    <lineage>
        <taxon>Eukaryota</taxon>
        <taxon>Viridiplantae</taxon>
        <taxon>Streptophyta</taxon>
        <taxon>Embryophyta</taxon>
        <taxon>Tracheophyta</taxon>
        <taxon>Spermatophyta</taxon>
        <taxon>Magnoliopsida</taxon>
        <taxon>Liliopsida</taxon>
        <taxon>Poales</taxon>
        <taxon>Poaceae</taxon>
        <taxon>PACMAD clade</taxon>
        <taxon>Panicoideae</taxon>
        <taxon>Andropogonodae</taxon>
        <taxon>Andropogoneae</taxon>
        <taxon>Tripsacinae</taxon>
        <taxon>Zea</taxon>
    </lineage>
</organism>
<keyword id="KW-0150">Chloroplast</keyword>
<keyword id="KW-0934">Plastid</keyword>
<keyword id="KW-1185">Reference proteome</keyword>
<keyword id="KW-0687">Ribonucleoprotein</keyword>
<keyword id="KW-0689">Ribosomal protein</keyword>
<keyword id="KW-0694">RNA-binding</keyword>
<keyword id="KW-0699">rRNA-binding</keyword>
<protein>
    <recommendedName>
        <fullName evidence="3">Small ribosomal subunit protein uS4c</fullName>
    </recommendedName>
    <alternativeName>
        <fullName>30S ribosomal protein S4, chloroplastic</fullName>
    </alternativeName>
    <alternativeName>
        <fullName>Basic protein</fullName>
    </alternativeName>
</protein>